<gene>
    <name evidence="2" type="primary">infB</name>
    <name type="ordered locus">PputW619_0721</name>
</gene>
<feature type="chain" id="PRO_1000093815" description="Translation initiation factor IF-2">
    <location>
        <begin position="1"/>
        <end position="843"/>
    </location>
</feature>
<feature type="domain" description="tr-type G">
    <location>
        <begin position="343"/>
        <end position="516"/>
    </location>
</feature>
<feature type="region of interest" description="Disordered" evidence="3">
    <location>
        <begin position="50"/>
        <end position="72"/>
    </location>
</feature>
<feature type="region of interest" description="Disordered" evidence="3">
    <location>
        <begin position="94"/>
        <end position="260"/>
    </location>
</feature>
<feature type="region of interest" description="G1" evidence="1">
    <location>
        <begin position="352"/>
        <end position="359"/>
    </location>
</feature>
<feature type="region of interest" description="G2" evidence="1">
    <location>
        <begin position="377"/>
        <end position="381"/>
    </location>
</feature>
<feature type="region of interest" description="G3" evidence="1">
    <location>
        <begin position="398"/>
        <end position="401"/>
    </location>
</feature>
<feature type="region of interest" description="G4" evidence="1">
    <location>
        <begin position="452"/>
        <end position="455"/>
    </location>
</feature>
<feature type="region of interest" description="G5" evidence="1">
    <location>
        <begin position="488"/>
        <end position="490"/>
    </location>
</feature>
<feature type="compositionally biased region" description="Basic and acidic residues" evidence="3">
    <location>
        <begin position="96"/>
        <end position="135"/>
    </location>
</feature>
<feature type="compositionally biased region" description="Low complexity" evidence="3">
    <location>
        <begin position="139"/>
        <end position="173"/>
    </location>
</feature>
<feature type="compositionally biased region" description="Basic and acidic residues" evidence="3">
    <location>
        <begin position="174"/>
        <end position="203"/>
    </location>
</feature>
<feature type="compositionally biased region" description="Basic and acidic residues" evidence="3">
    <location>
        <begin position="227"/>
        <end position="236"/>
    </location>
</feature>
<feature type="compositionally biased region" description="Basic residues" evidence="3">
    <location>
        <begin position="237"/>
        <end position="250"/>
    </location>
</feature>
<feature type="binding site" evidence="2">
    <location>
        <begin position="352"/>
        <end position="359"/>
    </location>
    <ligand>
        <name>GTP</name>
        <dbReference type="ChEBI" id="CHEBI:37565"/>
    </ligand>
</feature>
<feature type="binding site" evidence="2">
    <location>
        <begin position="398"/>
        <end position="402"/>
    </location>
    <ligand>
        <name>GTP</name>
        <dbReference type="ChEBI" id="CHEBI:37565"/>
    </ligand>
</feature>
<feature type="binding site" evidence="2">
    <location>
        <begin position="452"/>
        <end position="455"/>
    </location>
    <ligand>
        <name>GTP</name>
        <dbReference type="ChEBI" id="CHEBI:37565"/>
    </ligand>
</feature>
<accession>B1J2A9</accession>
<organism>
    <name type="scientific">Pseudomonas putida (strain W619)</name>
    <dbReference type="NCBI Taxonomy" id="390235"/>
    <lineage>
        <taxon>Bacteria</taxon>
        <taxon>Pseudomonadati</taxon>
        <taxon>Pseudomonadota</taxon>
        <taxon>Gammaproteobacteria</taxon>
        <taxon>Pseudomonadales</taxon>
        <taxon>Pseudomonadaceae</taxon>
        <taxon>Pseudomonas</taxon>
    </lineage>
</organism>
<reference key="1">
    <citation type="submission" date="2008-02" db="EMBL/GenBank/DDBJ databases">
        <title>Complete sequence of Pseudomonas putida W619.</title>
        <authorList>
            <person name="Copeland A."/>
            <person name="Lucas S."/>
            <person name="Lapidus A."/>
            <person name="Barry K."/>
            <person name="Detter J.C."/>
            <person name="Glavina del Rio T."/>
            <person name="Dalin E."/>
            <person name="Tice H."/>
            <person name="Pitluck S."/>
            <person name="Chain P."/>
            <person name="Malfatti S."/>
            <person name="Shin M."/>
            <person name="Vergez L."/>
            <person name="Schmutz J."/>
            <person name="Larimer F."/>
            <person name="Land M."/>
            <person name="Hauser L."/>
            <person name="Kyrpides N."/>
            <person name="Kim E."/>
            <person name="Taghavi S."/>
            <person name="Vangronsveld D."/>
            <person name="van der Lelie D."/>
            <person name="Richardson P."/>
        </authorList>
    </citation>
    <scope>NUCLEOTIDE SEQUENCE [LARGE SCALE GENOMIC DNA]</scope>
    <source>
        <strain>W619</strain>
    </source>
</reference>
<dbReference type="EMBL" id="CP000949">
    <property type="protein sequence ID" value="ACA71226.1"/>
    <property type="molecule type" value="Genomic_DNA"/>
</dbReference>
<dbReference type="SMR" id="B1J2A9"/>
<dbReference type="STRING" id="390235.PputW619_0721"/>
<dbReference type="KEGG" id="ppw:PputW619_0721"/>
<dbReference type="eggNOG" id="COG0532">
    <property type="taxonomic scope" value="Bacteria"/>
</dbReference>
<dbReference type="HOGENOM" id="CLU_006301_6_2_6"/>
<dbReference type="OrthoDB" id="9811804at2"/>
<dbReference type="GO" id="GO:0005829">
    <property type="term" value="C:cytosol"/>
    <property type="evidence" value="ECO:0007669"/>
    <property type="project" value="TreeGrafter"/>
</dbReference>
<dbReference type="GO" id="GO:0005525">
    <property type="term" value="F:GTP binding"/>
    <property type="evidence" value="ECO:0007669"/>
    <property type="project" value="UniProtKB-KW"/>
</dbReference>
<dbReference type="GO" id="GO:0003924">
    <property type="term" value="F:GTPase activity"/>
    <property type="evidence" value="ECO:0007669"/>
    <property type="project" value="UniProtKB-UniRule"/>
</dbReference>
<dbReference type="GO" id="GO:0003743">
    <property type="term" value="F:translation initiation factor activity"/>
    <property type="evidence" value="ECO:0007669"/>
    <property type="project" value="UniProtKB-UniRule"/>
</dbReference>
<dbReference type="CDD" id="cd01887">
    <property type="entry name" value="IF2_eIF5B"/>
    <property type="match status" value="1"/>
</dbReference>
<dbReference type="CDD" id="cd03702">
    <property type="entry name" value="IF2_mtIF2_II"/>
    <property type="match status" value="1"/>
</dbReference>
<dbReference type="CDD" id="cd03692">
    <property type="entry name" value="mtIF2_IVc"/>
    <property type="match status" value="1"/>
</dbReference>
<dbReference type="FunFam" id="2.40.30.10:FF:000007">
    <property type="entry name" value="Translation initiation factor IF-2"/>
    <property type="match status" value="1"/>
</dbReference>
<dbReference type="FunFam" id="2.40.30.10:FF:000008">
    <property type="entry name" value="Translation initiation factor IF-2"/>
    <property type="match status" value="1"/>
</dbReference>
<dbReference type="FunFam" id="3.40.50.10050:FF:000001">
    <property type="entry name" value="Translation initiation factor IF-2"/>
    <property type="match status" value="1"/>
</dbReference>
<dbReference type="FunFam" id="3.40.50.300:FF:000019">
    <property type="entry name" value="Translation initiation factor IF-2"/>
    <property type="match status" value="1"/>
</dbReference>
<dbReference type="Gene3D" id="3.40.50.300">
    <property type="entry name" value="P-loop containing nucleotide triphosphate hydrolases"/>
    <property type="match status" value="1"/>
</dbReference>
<dbReference type="Gene3D" id="3.30.56.50">
    <property type="entry name" value="Putative DNA-binding domain, N-terminal subdomain of bacterial translation initiation factor IF2"/>
    <property type="match status" value="1"/>
</dbReference>
<dbReference type="Gene3D" id="2.40.30.10">
    <property type="entry name" value="Translation factors"/>
    <property type="match status" value="2"/>
</dbReference>
<dbReference type="Gene3D" id="3.40.50.10050">
    <property type="entry name" value="Translation initiation factor IF- 2, domain 3"/>
    <property type="match status" value="1"/>
</dbReference>
<dbReference type="HAMAP" id="MF_00100_B">
    <property type="entry name" value="IF_2_B"/>
    <property type="match status" value="1"/>
</dbReference>
<dbReference type="InterPro" id="IPR009061">
    <property type="entry name" value="DNA-bd_dom_put_sf"/>
</dbReference>
<dbReference type="InterPro" id="IPR053905">
    <property type="entry name" value="EF-G-like_DII"/>
</dbReference>
<dbReference type="InterPro" id="IPR013575">
    <property type="entry name" value="IF2_assoc_dom_bac"/>
</dbReference>
<dbReference type="InterPro" id="IPR044145">
    <property type="entry name" value="IF2_II"/>
</dbReference>
<dbReference type="InterPro" id="IPR006847">
    <property type="entry name" value="IF2_N"/>
</dbReference>
<dbReference type="InterPro" id="IPR027417">
    <property type="entry name" value="P-loop_NTPase"/>
</dbReference>
<dbReference type="InterPro" id="IPR005225">
    <property type="entry name" value="Small_GTP-bd"/>
</dbReference>
<dbReference type="InterPro" id="IPR000795">
    <property type="entry name" value="T_Tr_GTP-bd_dom"/>
</dbReference>
<dbReference type="InterPro" id="IPR000178">
    <property type="entry name" value="TF_IF2_bacterial-like"/>
</dbReference>
<dbReference type="InterPro" id="IPR015760">
    <property type="entry name" value="TIF_IF2"/>
</dbReference>
<dbReference type="InterPro" id="IPR023115">
    <property type="entry name" value="TIF_IF2_dom3"/>
</dbReference>
<dbReference type="InterPro" id="IPR036925">
    <property type="entry name" value="TIF_IF2_dom3_sf"/>
</dbReference>
<dbReference type="InterPro" id="IPR009000">
    <property type="entry name" value="Transl_B-barrel_sf"/>
</dbReference>
<dbReference type="NCBIfam" id="TIGR00487">
    <property type="entry name" value="IF-2"/>
    <property type="match status" value="1"/>
</dbReference>
<dbReference type="NCBIfam" id="TIGR00231">
    <property type="entry name" value="small_GTP"/>
    <property type="match status" value="1"/>
</dbReference>
<dbReference type="PANTHER" id="PTHR43381:SF5">
    <property type="entry name" value="TR-TYPE G DOMAIN-CONTAINING PROTEIN"/>
    <property type="match status" value="1"/>
</dbReference>
<dbReference type="PANTHER" id="PTHR43381">
    <property type="entry name" value="TRANSLATION INITIATION FACTOR IF-2-RELATED"/>
    <property type="match status" value="1"/>
</dbReference>
<dbReference type="Pfam" id="PF22042">
    <property type="entry name" value="EF-G_D2"/>
    <property type="match status" value="1"/>
</dbReference>
<dbReference type="Pfam" id="PF00009">
    <property type="entry name" value="GTP_EFTU"/>
    <property type="match status" value="1"/>
</dbReference>
<dbReference type="Pfam" id="PF11987">
    <property type="entry name" value="IF-2"/>
    <property type="match status" value="1"/>
</dbReference>
<dbReference type="Pfam" id="PF08364">
    <property type="entry name" value="IF2_assoc"/>
    <property type="match status" value="1"/>
</dbReference>
<dbReference type="Pfam" id="PF04760">
    <property type="entry name" value="IF2_N"/>
    <property type="match status" value="2"/>
</dbReference>
<dbReference type="SUPFAM" id="SSF52156">
    <property type="entry name" value="Initiation factor IF2/eIF5b, domain 3"/>
    <property type="match status" value="1"/>
</dbReference>
<dbReference type="SUPFAM" id="SSF52540">
    <property type="entry name" value="P-loop containing nucleoside triphosphate hydrolases"/>
    <property type="match status" value="1"/>
</dbReference>
<dbReference type="SUPFAM" id="SSF46955">
    <property type="entry name" value="Putative DNA-binding domain"/>
    <property type="match status" value="1"/>
</dbReference>
<dbReference type="SUPFAM" id="SSF50447">
    <property type="entry name" value="Translation proteins"/>
    <property type="match status" value="2"/>
</dbReference>
<dbReference type="PROSITE" id="PS51722">
    <property type="entry name" value="G_TR_2"/>
    <property type="match status" value="1"/>
</dbReference>
<dbReference type="PROSITE" id="PS01176">
    <property type="entry name" value="IF2"/>
    <property type="match status" value="1"/>
</dbReference>
<protein>
    <recommendedName>
        <fullName evidence="2">Translation initiation factor IF-2</fullName>
    </recommendedName>
</protein>
<keyword id="KW-0963">Cytoplasm</keyword>
<keyword id="KW-0342">GTP-binding</keyword>
<keyword id="KW-0396">Initiation factor</keyword>
<keyword id="KW-0547">Nucleotide-binding</keyword>
<keyword id="KW-0648">Protein biosynthesis</keyword>
<sequence>MTQVTVKELAQEVEAPVERLLQQMREAGLPHTDAGQVVTDNEKQTLLTHLKSSHKSKAEEPRKITLQRKTTSTLRVAGSKSISVEVRKKKVFVQRSPEEIQAEQKREQDERRAAENAARDKVDADVRQRNEEQARRHATATAAAAPAAKAEPAPAAAAPAPAPVVADAPASEDAAARAAERKKDETRRNESRTRDDDRRRGEAPRVSIKVKVKEKEKAPTPRAAPRTTDEESDGARRGRGGKGKLKKRNQHGFQNPTGPVIRDVTIGETITVSELAQQMSVKAAEVVKFMFKMGTPVTINQVLDQETAQLIAEELGHKVTLVSDTALEDSLAESLKFEGQAESRAPVVTVMGHVDHGKTSLLDYIRRAKVAAGEAGGITQHIGAYHVETDRGMVTFLDTPGHAAFTQMRARGAKATDIVILVVAADDGVMPQTREAVQHAKAAGVPLVVAVNKIDKPGADLDRIRNELSVEGVTSEEWGGDTPFVKVSAKMGTGVDELLEAVLLQAEVLELTATPTAPGRGVVVESRLDKGRGPVATILVQDGTLRQGDMVLCGSNYGRVRAMLDENGKPVKEAGPSIPVEILGLDGTPEAGDELSVVADEKKAREVALFRQGKYREVKLARAHAGKLENIFETMGQEEKKTLNIVLKTDVRGSLEALQGSLGGLGNDEVQVRVIGGGVGGITESDANLALASNAVLFGFNVRADAGARKIVEQEGLDMRYYNVIYDIIEDVKKALTGMLGSDVRENILGVAEVRDVFRSPKFGAIAGCMVIEGTVYRNRPIRVLRDDVVIFEGELESLRRFKDDAAEVRSGMECGIGVKSYNDVKVGDKIEVFEKVQVARTL</sequence>
<comment type="function">
    <text evidence="2">One of the essential components for the initiation of protein synthesis. Protects formylmethionyl-tRNA from spontaneous hydrolysis and promotes its binding to the 30S ribosomal subunits. Also involved in the hydrolysis of GTP during the formation of the 70S ribosomal complex.</text>
</comment>
<comment type="subcellular location">
    <subcellularLocation>
        <location evidence="2">Cytoplasm</location>
    </subcellularLocation>
</comment>
<comment type="similarity">
    <text evidence="2">Belongs to the TRAFAC class translation factor GTPase superfamily. Classic translation factor GTPase family. IF-2 subfamily.</text>
</comment>
<name>IF2_PSEPW</name>
<evidence type="ECO:0000250" key="1"/>
<evidence type="ECO:0000255" key="2">
    <source>
        <dbReference type="HAMAP-Rule" id="MF_00100"/>
    </source>
</evidence>
<evidence type="ECO:0000256" key="3">
    <source>
        <dbReference type="SAM" id="MobiDB-lite"/>
    </source>
</evidence>
<proteinExistence type="inferred from homology"/>